<evidence type="ECO:0000255" key="1"/>
<evidence type="ECO:0000256" key="2">
    <source>
        <dbReference type="SAM" id="MobiDB-lite"/>
    </source>
</evidence>
<evidence type="ECO:0000269" key="3">
    <source>
    </source>
</evidence>
<evidence type="ECO:0000269" key="4">
    <source>
    </source>
</evidence>
<evidence type="ECO:0000269" key="5">
    <source>
    </source>
</evidence>
<evidence type="ECO:0000269" key="6">
    <source>
    </source>
</evidence>
<evidence type="ECO:0000269" key="7">
    <source>
    </source>
</evidence>
<evidence type="ECO:0000303" key="8">
    <source>
    </source>
</evidence>
<evidence type="ECO:0000305" key="9"/>
<keyword id="KW-0025">Alternative splicing</keyword>
<keyword id="KW-0067">ATP-binding</keyword>
<keyword id="KW-0143">Chaperone</keyword>
<keyword id="KW-0150">Chloroplast</keyword>
<keyword id="KW-0547">Nucleotide-binding</keyword>
<keyword id="KW-0934">Plastid</keyword>
<keyword id="KW-0653">Protein transport</keyword>
<keyword id="KW-1185">Reference proteome</keyword>
<keyword id="KW-0346">Stress response</keyword>
<keyword id="KW-0809">Transit peptide</keyword>
<keyword id="KW-0813">Transport</keyword>
<gene>
    <name type="primary">HSP70-7</name>
    <name type="synonym">CPHSC70-2</name>
    <name type="synonym">HSC70-7</name>
    <name type="ordered locus">At5g49910</name>
    <name type="ORF">K9P8.5</name>
</gene>
<reference key="1">
    <citation type="journal article" date="2001" name="Plant Physiol.">
        <title>Comprehensive expression profile analysis of the Arabidopsis Hsp70 gene family.</title>
        <authorList>
            <person name="Sung D.Y."/>
            <person name="Vierling E."/>
            <person name="Guy C.L."/>
        </authorList>
    </citation>
    <scope>NUCLEOTIDE SEQUENCE [MRNA] (ISOFORM 1)</scope>
    <scope>DNAK GENE SUBFAMILY</scope>
    <scope>INDUCTION</scope>
    <scope>DEVELOPMENTAL STAGE</scope>
    <source>
        <strain>cv. Columbia</strain>
    </source>
</reference>
<reference key="2">
    <citation type="journal article" date="2000" name="DNA Res.">
        <title>Structural analysis of Arabidopsis thaliana chromosome 5. X. Sequence features of the regions of 3,076,755 bp covered by sixty P1 and TAC clones.</title>
        <authorList>
            <person name="Sato S."/>
            <person name="Nakamura Y."/>
            <person name="Kaneko T."/>
            <person name="Katoh T."/>
            <person name="Asamizu E."/>
            <person name="Kotani H."/>
            <person name="Tabata S."/>
        </authorList>
    </citation>
    <scope>NUCLEOTIDE SEQUENCE [LARGE SCALE GENOMIC DNA]</scope>
    <source>
        <strain>cv. Columbia</strain>
    </source>
</reference>
<reference key="3">
    <citation type="journal article" date="2017" name="Plant J.">
        <title>Araport11: a complete reannotation of the Arabidopsis thaliana reference genome.</title>
        <authorList>
            <person name="Cheng C.Y."/>
            <person name="Krishnakumar V."/>
            <person name="Chan A.P."/>
            <person name="Thibaud-Nissen F."/>
            <person name="Schobel S."/>
            <person name="Town C.D."/>
        </authorList>
    </citation>
    <scope>GENOME REANNOTATION</scope>
    <source>
        <strain>cv. Columbia</strain>
    </source>
</reference>
<reference key="4">
    <citation type="journal article" date="2003" name="Science">
        <title>Empirical analysis of transcriptional activity in the Arabidopsis genome.</title>
        <authorList>
            <person name="Yamada K."/>
            <person name="Lim J."/>
            <person name="Dale J.M."/>
            <person name="Chen H."/>
            <person name="Shinn P."/>
            <person name="Palm C.J."/>
            <person name="Southwick A.M."/>
            <person name="Wu H.C."/>
            <person name="Kim C.J."/>
            <person name="Nguyen M."/>
            <person name="Pham P.K."/>
            <person name="Cheuk R.F."/>
            <person name="Karlin-Newmann G."/>
            <person name="Liu S.X."/>
            <person name="Lam B."/>
            <person name="Sakano H."/>
            <person name="Wu T."/>
            <person name="Yu G."/>
            <person name="Miranda M."/>
            <person name="Quach H.L."/>
            <person name="Tripp M."/>
            <person name="Chang C.H."/>
            <person name="Lee J.M."/>
            <person name="Toriumi M.J."/>
            <person name="Chan M.M."/>
            <person name="Tang C.C."/>
            <person name="Onodera C.S."/>
            <person name="Deng J.M."/>
            <person name="Akiyama K."/>
            <person name="Ansari Y."/>
            <person name="Arakawa T."/>
            <person name="Banh J."/>
            <person name="Banno F."/>
            <person name="Bowser L."/>
            <person name="Brooks S.Y."/>
            <person name="Carninci P."/>
            <person name="Chao Q."/>
            <person name="Choy N."/>
            <person name="Enju A."/>
            <person name="Goldsmith A.D."/>
            <person name="Gurjal M."/>
            <person name="Hansen N.F."/>
            <person name="Hayashizaki Y."/>
            <person name="Johnson-Hopson C."/>
            <person name="Hsuan V.W."/>
            <person name="Iida K."/>
            <person name="Karnes M."/>
            <person name="Khan S."/>
            <person name="Koesema E."/>
            <person name="Ishida J."/>
            <person name="Jiang P.X."/>
            <person name="Jones T."/>
            <person name="Kawai J."/>
            <person name="Kamiya A."/>
            <person name="Meyers C."/>
            <person name="Nakajima M."/>
            <person name="Narusaka M."/>
            <person name="Seki M."/>
            <person name="Sakurai T."/>
            <person name="Satou M."/>
            <person name="Tamse R."/>
            <person name="Vaysberg M."/>
            <person name="Wallender E.K."/>
            <person name="Wong C."/>
            <person name="Yamamura Y."/>
            <person name="Yuan S."/>
            <person name="Shinozaki K."/>
            <person name="Davis R.W."/>
            <person name="Theologis A."/>
            <person name="Ecker J.R."/>
        </authorList>
    </citation>
    <scope>NUCLEOTIDE SEQUENCE [LARGE SCALE MRNA] (ISOFORMS 1 AND 2)</scope>
    <source>
        <strain>cv. Columbia</strain>
    </source>
</reference>
<reference key="5">
    <citation type="journal article" date="2001" name="Cell Stress Chaperones">
        <title>Genomic analysis of the Hsp70 superfamily in Arabidopsis thaliana.</title>
        <authorList>
            <person name="Lin B.L."/>
            <person name="Wang J.S."/>
            <person name="Liu H.C."/>
            <person name="Chen R.W."/>
            <person name="Meyer Y."/>
            <person name="Barakat A."/>
            <person name="Delseny M."/>
        </authorList>
    </citation>
    <scope>GENE FAMILY</scope>
    <scope>NOMENCLATURE</scope>
</reference>
<reference key="6">
    <citation type="journal article" date="2008" name="Biosci. Biotechnol. Biochem.">
        <title>Alternative processing of Arabidopsis Hsp70 precursors during protein import into chloroplasts.</title>
        <authorList>
            <person name="Ratnayake R.M."/>
            <person name="Inoue H."/>
            <person name="Nonami H."/>
            <person name="Akita M."/>
        </authorList>
    </citation>
    <scope>SUBCELLULAR LOCATION</scope>
</reference>
<reference key="7">
    <citation type="journal article" date="2008" name="Plant Physiol.">
        <title>Arabidopsis stromal 70-kD heat shock proteins are essential for plant development and important for thermotolerance of germinating seeds.</title>
        <authorList>
            <person name="Su P.H."/>
            <person name="Li H.M."/>
        </authorList>
    </citation>
    <scope>FUNCTION</scope>
</reference>
<reference key="8">
    <citation type="journal article" date="2010" name="Planta">
        <title>Arabidopsis stromal 70-kDa heat shock proteins are essential for chloroplast development.</title>
        <authorList>
            <person name="Latijnhouwers M."/>
            <person name="Xu X.M."/>
            <person name="Moeller S.G."/>
        </authorList>
    </citation>
    <scope>FUNCTION</scope>
    <scope>SUBCELLULAR LOCATION</scope>
</reference>
<reference key="9">
    <citation type="journal article" date="2010" name="Plant Cell">
        <title>Stromal Hsp70 is important for protein translocation into pea and Arabidopsis chloroplasts.</title>
        <authorList>
            <person name="Su P.H."/>
            <person name="Li H.M."/>
        </authorList>
    </citation>
    <scope>FUNCTION</scope>
    <scope>DISRUPTION PHENOTYPE</scope>
</reference>
<protein>
    <recommendedName>
        <fullName>Heat shock 70 kDa protein 7, chloroplastic</fullName>
    </recommendedName>
    <alternativeName>
        <fullName>Chloroplast heat shock protein 70-2</fullName>
        <shortName>cpHsc70-2</shortName>
    </alternativeName>
    <alternativeName>
        <fullName>Heat shock protein 70-7</fullName>
        <shortName>AtHsp70-7</shortName>
    </alternativeName>
</protein>
<feature type="transit peptide" description="Chloroplast" evidence="1">
    <location>
        <begin position="1"/>
        <end position="92"/>
    </location>
</feature>
<feature type="chain" id="PRO_0000415426" description="Heat shock 70 kDa protein 7, chloroplastic">
    <location>
        <begin position="93"/>
        <end position="718"/>
    </location>
</feature>
<feature type="region of interest" description="Disordered" evidence="2">
    <location>
        <begin position="668"/>
        <end position="718"/>
    </location>
</feature>
<feature type="compositionally biased region" description="Polar residues" evidence="2">
    <location>
        <begin position="668"/>
        <end position="678"/>
    </location>
</feature>
<feature type="splice variant" id="VSP_042242" description="In isoform 2." evidence="8">
    <original>SLPFITATADGPKHIETTL</original>
    <variation>RFTFPSQIYLPRSHWYVGY</variation>
    <location>
        <begin position="353"/>
        <end position="371"/>
    </location>
</feature>
<feature type="splice variant" id="VSP_042243" description="In isoform 2." evidence="8">
    <location>
        <begin position="372"/>
        <end position="718"/>
    </location>
</feature>
<feature type="sequence conflict" description="In Ref. 1; AAF27639." evidence="9" ref="1">
    <original>TSSS</original>
    <variation>NSFC</variation>
    <location>
        <begin position="18"/>
        <end position="21"/>
    </location>
</feature>
<feature type="sequence conflict" description="In Ref. 1; AAF27639." evidence="9" ref="1">
    <original>T</original>
    <variation>S</variation>
    <location>
        <position position="49"/>
    </location>
</feature>
<feature type="sequence conflict" description="In Ref. 1; AAF27639." evidence="9" ref="1">
    <original>L</original>
    <variation>F</variation>
    <location>
        <position position="400"/>
    </location>
</feature>
<feature type="sequence conflict" description="In Ref. 1; AAF27639." evidence="9" ref="1">
    <original>K</original>
    <variation>Q</variation>
    <location>
        <position position="562"/>
    </location>
</feature>
<comment type="function">
    <text evidence="4 6 7">Acts redundantly with HSP70-6 in the thermotolerance of germinating seeds. Plays an important role in the protein precursor import into chloroplasts.</text>
</comment>
<comment type="function">
    <text evidence="9">In cooperation with other chaperones, Hsp70s are key components that facilitate folding of de novo synthesized proteins, assist translocation of precursor proteins into organelles, and are responsible for degradation of damaged protein under stress conditions.</text>
</comment>
<comment type="subcellular location">
    <subcellularLocation>
        <location evidence="5 7">Plastid</location>
        <location evidence="5 7">Chloroplast stroma</location>
    </subcellularLocation>
</comment>
<comment type="alternative products">
    <event type="alternative splicing"/>
    <isoform>
        <id>Q9LTX9-1</id>
        <name>1</name>
        <sequence type="displayed"/>
    </isoform>
    <isoform>
        <id>Q9LTX9-2</id>
        <name>2</name>
        <sequence type="described" ref="VSP_042242 VSP_042243"/>
    </isoform>
</comment>
<comment type="developmental stage">
    <text evidence="3">Down-regulated during seed maturation. Up-regulated during germination.</text>
</comment>
<comment type="induction">
    <text evidence="3">By heat shock.</text>
</comment>
<comment type="disruption phenotype">
    <text evidence="6">Defective in protein import into chloroplasts during early developmental stages.</text>
</comment>
<comment type="miscellaneous">
    <molecule>Isoform 2</molecule>
    <text evidence="9">May be due to an intron retention.</text>
</comment>
<comment type="similarity">
    <text evidence="9">Belongs to the heat shock protein 70 (TC 1.A.33) family. DnaK subfamily.</text>
</comment>
<proteinExistence type="evidence at transcript level"/>
<organism>
    <name type="scientific">Arabidopsis thaliana</name>
    <name type="common">Mouse-ear cress</name>
    <dbReference type="NCBI Taxonomy" id="3702"/>
    <lineage>
        <taxon>Eukaryota</taxon>
        <taxon>Viridiplantae</taxon>
        <taxon>Streptophyta</taxon>
        <taxon>Embryophyta</taxon>
        <taxon>Tracheophyta</taxon>
        <taxon>Spermatophyta</taxon>
        <taxon>Magnoliopsida</taxon>
        <taxon>eudicotyledons</taxon>
        <taxon>Gunneridae</taxon>
        <taxon>Pentapetalae</taxon>
        <taxon>rosids</taxon>
        <taxon>malvids</taxon>
        <taxon>Brassicales</taxon>
        <taxon>Brassicaceae</taxon>
        <taxon>Camelineae</taxon>
        <taxon>Arabidopsis</taxon>
    </lineage>
</organism>
<sequence>MASSAAQIHILGGIGFPTSSSSSSTKNLDNKTNSIPRSVFFGNRTSPFTTPTSAFLRMGRRNNNASRYTVGPVRVVNEKVVGIDLGTTNSAVAAMEGGKPTIVTNAEGQRTTPSVVAYTKSKDRLVGQIAKRQAVVNPENTFFSVKRFIGRRMNEVAEESKQVSYRVIKDENGNVKLDCPAIGKQFAAEEISAQVLRKLVDDASRFLNDKVTKAVITVPAYFNDSQRTATKDAGRIAGLEVLRIINEPTAASLAYGFERKSNETILVFDLGGGTFDVSVLEVGDGVFEVLSTSGDTHLGGDDFDKRVVDWLASTFKKDEGIDLLKDKQALQRLTEAAEKAKIELSSLTQTNMSLPFITATADGPKHIETTLTRGKFEELCSDLLDRVRTPVENSLRDAKLSFKDIDEVILVGGSTRIPAVQDLVRKLTGKEPNVSVNPDEVVALGAAVQAGVLSGDVSDIVLLDVTPLSLGLETLGGVMTKIIPRNTTLPTSKSEVFSTAADGQTSVEINVLQGEREFVRDNKSIGSFRLDGIPPAPRGVPQIEVKFDIDANGILSVSASDKGTGKKQDITITGASTLPKDEVDTMVQEAERFAKEDKEKRDAIDTKNQADSVVYQTEKQLKELGEKIPGPVKEKVEAKLQELKEKIASGSTQEIKDTMAALNQEVMQIGQSLYNQPQPGGADSPPGGEASSSSDTSSSAKGGDNGGDVIDADFTDSN</sequence>
<dbReference type="EMBL" id="AF217459">
    <property type="protein sequence ID" value="AAF27639.1"/>
    <property type="molecule type" value="mRNA"/>
</dbReference>
<dbReference type="EMBL" id="AB024032">
    <property type="protein sequence ID" value="BAA97012.1"/>
    <property type="molecule type" value="Genomic_DNA"/>
</dbReference>
<dbReference type="EMBL" id="CP002688">
    <property type="protein sequence ID" value="AED95870.1"/>
    <property type="molecule type" value="Genomic_DNA"/>
</dbReference>
<dbReference type="EMBL" id="BT000919">
    <property type="protein sequence ID" value="AAN41319.1"/>
    <property type="molecule type" value="mRNA"/>
</dbReference>
<dbReference type="EMBL" id="AY081331">
    <property type="protein sequence ID" value="AAL91220.1"/>
    <property type="molecule type" value="mRNA"/>
</dbReference>
<dbReference type="EMBL" id="BT008452">
    <property type="protein sequence ID" value="AAP37811.1"/>
    <property type="molecule type" value="mRNA"/>
</dbReference>
<dbReference type="RefSeq" id="NP_199802.1">
    <molecule id="Q9LTX9-1"/>
    <property type="nucleotide sequence ID" value="NM_124369.4"/>
</dbReference>
<dbReference type="SMR" id="Q9LTX9"/>
<dbReference type="BioGRID" id="20300">
    <property type="interactions" value="35"/>
</dbReference>
<dbReference type="FunCoup" id="Q9LTX9">
    <property type="interactions" value="768"/>
</dbReference>
<dbReference type="IntAct" id="Q9LTX9">
    <property type="interactions" value="1"/>
</dbReference>
<dbReference type="MINT" id="Q9LTX9"/>
<dbReference type="STRING" id="3702.Q9LTX9"/>
<dbReference type="iPTMnet" id="Q9LTX9"/>
<dbReference type="PaxDb" id="3702-AT5G49910.1"/>
<dbReference type="ProteomicsDB" id="230253">
    <molecule id="Q9LTX9-1"/>
</dbReference>
<dbReference type="EnsemblPlants" id="AT5G49910.1">
    <molecule id="Q9LTX9-1"/>
    <property type="protein sequence ID" value="AT5G49910.1"/>
    <property type="gene ID" value="AT5G49910"/>
</dbReference>
<dbReference type="GeneID" id="835054"/>
<dbReference type="Gramene" id="AT5G49910.1">
    <molecule id="Q9LTX9-1"/>
    <property type="protein sequence ID" value="AT5G49910.1"/>
    <property type="gene ID" value="AT5G49910"/>
</dbReference>
<dbReference type="KEGG" id="ath:AT5G49910"/>
<dbReference type="Araport" id="AT5G49910"/>
<dbReference type="TAIR" id="AT5G49910">
    <property type="gene designation" value="CPHSC70-2"/>
</dbReference>
<dbReference type="eggNOG" id="KOG0102">
    <property type="taxonomic scope" value="Eukaryota"/>
</dbReference>
<dbReference type="HOGENOM" id="CLU_005965_2_4_1"/>
<dbReference type="InParanoid" id="Q9LTX9"/>
<dbReference type="OMA" id="AYNDQSA"/>
<dbReference type="PhylomeDB" id="Q9LTX9"/>
<dbReference type="PRO" id="PR:Q9LTX9"/>
<dbReference type="Proteomes" id="UP000006548">
    <property type="component" value="Chromosome 5"/>
</dbReference>
<dbReference type="ExpressionAtlas" id="Q9LTX9">
    <property type="expression patterns" value="baseline and differential"/>
</dbReference>
<dbReference type="GO" id="GO:0048046">
    <property type="term" value="C:apoplast"/>
    <property type="evidence" value="ECO:0007005"/>
    <property type="project" value="TAIR"/>
</dbReference>
<dbReference type="GO" id="GO:0009507">
    <property type="term" value="C:chloroplast"/>
    <property type="evidence" value="ECO:0007005"/>
    <property type="project" value="TAIR"/>
</dbReference>
<dbReference type="GO" id="GO:0009941">
    <property type="term" value="C:chloroplast envelope"/>
    <property type="evidence" value="ECO:0007005"/>
    <property type="project" value="TAIR"/>
</dbReference>
<dbReference type="GO" id="GO:0009570">
    <property type="term" value="C:chloroplast stroma"/>
    <property type="evidence" value="ECO:0007005"/>
    <property type="project" value="TAIR"/>
</dbReference>
<dbReference type="GO" id="GO:0009536">
    <property type="term" value="C:plastid"/>
    <property type="evidence" value="ECO:0007005"/>
    <property type="project" value="TAIR"/>
</dbReference>
<dbReference type="GO" id="GO:0009532">
    <property type="term" value="C:plastid stroma"/>
    <property type="evidence" value="ECO:0000314"/>
    <property type="project" value="TAIR"/>
</dbReference>
<dbReference type="GO" id="GO:0009579">
    <property type="term" value="C:thylakoid"/>
    <property type="evidence" value="ECO:0007005"/>
    <property type="project" value="TAIR"/>
</dbReference>
<dbReference type="GO" id="GO:0005524">
    <property type="term" value="F:ATP binding"/>
    <property type="evidence" value="ECO:0007669"/>
    <property type="project" value="UniProtKB-KW"/>
</dbReference>
<dbReference type="GO" id="GO:0140662">
    <property type="term" value="F:ATP-dependent protein folding chaperone"/>
    <property type="evidence" value="ECO:0007669"/>
    <property type="project" value="InterPro"/>
</dbReference>
<dbReference type="GO" id="GO:0051082">
    <property type="term" value="F:unfolded protein binding"/>
    <property type="evidence" value="ECO:0007669"/>
    <property type="project" value="InterPro"/>
</dbReference>
<dbReference type="GO" id="GO:0045036">
    <property type="term" value="P:protein targeting to chloroplast"/>
    <property type="evidence" value="ECO:0000315"/>
    <property type="project" value="TAIR"/>
</dbReference>
<dbReference type="GO" id="GO:0015031">
    <property type="term" value="P:protein transport"/>
    <property type="evidence" value="ECO:0007669"/>
    <property type="project" value="UniProtKB-KW"/>
</dbReference>
<dbReference type="GO" id="GO:0009408">
    <property type="term" value="P:response to heat"/>
    <property type="evidence" value="ECO:0000270"/>
    <property type="project" value="TAIR"/>
</dbReference>
<dbReference type="CDD" id="cd10234">
    <property type="entry name" value="ASKHA_NBD_HSP70_DnaK-like"/>
    <property type="match status" value="1"/>
</dbReference>
<dbReference type="FunFam" id="2.60.34.10:FF:000014">
    <property type="entry name" value="Chaperone protein DnaK HSP70"/>
    <property type="match status" value="1"/>
</dbReference>
<dbReference type="FunFam" id="1.20.1270.10:FF:000001">
    <property type="entry name" value="Molecular chaperone DnaK"/>
    <property type="match status" value="1"/>
</dbReference>
<dbReference type="FunFam" id="3.30.420.40:FF:000004">
    <property type="entry name" value="Molecular chaperone DnaK"/>
    <property type="match status" value="1"/>
</dbReference>
<dbReference type="FunFam" id="3.90.640.10:FF:000003">
    <property type="entry name" value="Molecular chaperone DnaK"/>
    <property type="match status" value="1"/>
</dbReference>
<dbReference type="Gene3D" id="1.20.1270.10">
    <property type="match status" value="1"/>
</dbReference>
<dbReference type="Gene3D" id="3.30.420.40">
    <property type="match status" value="2"/>
</dbReference>
<dbReference type="Gene3D" id="3.90.640.10">
    <property type="entry name" value="Actin, Chain A, domain 4"/>
    <property type="match status" value="1"/>
</dbReference>
<dbReference type="Gene3D" id="2.60.34.10">
    <property type="entry name" value="Substrate Binding Domain Of DNAk, Chain A, domain 1"/>
    <property type="match status" value="1"/>
</dbReference>
<dbReference type="HAMAP" id="MF_00332">
    <property type="entry name" value="DnaK"/>
    <property type="match status" value="1"/>
</dbReference>
<dbReference type="InterPro" id="IPR043129">
    <property type="entry name" value="ATPase_NBD"/>
</dbReference>
<dbReference type="InterPro" id="IPR012725">
    <property type="entry name" value="Chaperone_DnaK"/>
</dbReference>
<dbReference type="InterPro" id="IPR018181">
    <property type="entry name" value="Heat_shock_70_CS"/>
</dbReference>
<dbReference type="InterPro" id="IPR029048">
    <property type="entry name" value="HSP70_C_sf"/>
</dbReference>
<dbReference type="InterPro" id="IPR029047">
    <property type="entry name" value="HSP70_peptide-bd_sf"/>
</dbReference>
<dbReference type="InterPro" id="IPR013126">
    <property type="entry name" value="Hsp_70_fam"/>
</dbReference>
<dbReference type="NCBIfam" id="NF001413">
    <property type="entry name" value="PRK00290.1"/>
    <property type="match status" value="1"/>
</dbReference>
<dbReference type="NCBIfam" id="TIGR02350">
    <property type="entry name" value="prok_dnaK"/>
    <property type="match status" value="1"/>
</dbReference>
<dbReference type="PANTHER" id="PTHR19375">
    <property type="entry name" value="HEAT SHOCK PROTEIN 70KDA"/>
    <property type="match status" value="1"/>
</dbReference>
<dbReference type="Pfam" id="PF00012">
    <property type="entry name" value="HSP70"/>
    <property type="match status" value="1"/>
</dbReference>
<dbReference type="PRINTS" id="PR00301">
    <property type="entry name" value="HEATSHOCK70"/>
</dbReference>
<dbReference type="SUPFAM" id="SSF53067">
    <property type="entry name" value="Actin-like ATPase domain"/>
    <property type="match status" value="2"/>
</dbReference>
<dbReference type="SUPFAM" id="SSF100934">
    <property type="entry name" value="Heat shock protein 70kD (HSP70), C-terminal subdomain"/>
    <property type="match status" value="1"/>
</dbReference>
<dbReference type="SUPFAM" id="SSF100920">
    <property type="entry name" value="Heat shock protein 70kD (HSP70), peptide-binding domain"/>
    <property type="match status" value="1"/>
</dbReference>
<dbReference type="PROSITE" id="PS00297">
    <property type="entry name" value="HSP70_1"/>
    <property type="match status" value="1"/>
</dbReference>
<dbReference type="PROSITE" id="PS00329">
    <property type="entry name" value="HSP70_2"/>
    <property type="match status" value="1"/>
</dbReference>
<dbReference type="PROSITE" id="PS01036">
    <property type="entry name" value="HSP70_3"/>
    <property type="match status" value="1"/>
</dbReference>
<name>HSP7G_ARATH</name>
<accession>Q9LTX9</accession>
<accession>Q8RXD1</accession>
<accession>Q9M637</accession>